<proteinExistence type="inferred from homology"/>
<comment type="function">
    <text evidence="1">Component of the proteasome core, a large protease complex with broad specificity involved in protein degradation.</text>
</comment>
<comment type="catalytic activity">
    <reaction evidence="1">
        <text>Cleavage of peptide bonds with very broad specificity.</text>
        <dbReference type="EC" id="3.4.25.1"/>
    </reaction>
</comment>
<comment type="activity regulation">
    <text evidence="1">The formation of the proteasomal ATPase ARC-20S proteasome complex, likely via the docking of the C-termini of ARC into the intersubunit pockets in the alpha-rings, may trigger opening of the gate for substrate entry. Interconversion between the open-gate and close-gate conformations leads to a dynamic regulation of the 20S proteasome proteolysis activity.</text>
</comment>
<comment type="pathway">
    <text evidence="1">Protein degradation; proteasomal Pup-dependent pathway.</text>
</comment>
<comment type="subunit">
    <text evidence="1">The 20S proteasome core is composed of 14 alpha and 14 beta subunits that assemble into four stacked heptameric rings, resulting in a barrel-shaped structure. The two inner rings, each composed of seven catalytic beta subunits, are sandwiched by two outer rings, each composed of seven alpha subunits. The catalytic chamber with the active sites is on the inside of the barrel. Has a gated structure, the ends of the cylinder being occluded by the N-termini of the alpha-subunits. Is capped by the proteasome-associated ATPase, ARC.</text>
</comment>
<comment type="subcellular location">
    <subcellularLocation>
        <location evidence="1">Cytoplasm</location>
    </subcellularLocation>
</comment>
<comment type="similarity">
    <text evidence="1">Belongs to the peptidase T1B family.</text>
</comment>
<feature type="propeptide" id="PRO_0000397562" description="Removed in mature form; by autocatalysis" evidence="1">
    <location>
        <begin position="1"/>
        <end position="56"/>
    </location>
</feature>
<feature type="chain" id="PRO_0000397563" description="Proteasome subunit beta">
    <location>
        <begin position="57"/>
        <end position="279"/>
    </location>
</feature>
<feature type="active site" description="Nucleophile" evidence="1">
    <location>
        <position position="57"/>
    </location>
</feature>
<reference key="1">
    <citation type="journal article" date="2008" name="J. Bacteriol.">
        <title>Genome sequence of the fish pathogen Renibacterium salmoninarum suggests reductive evolution away from an environmental Arthrobacter ancestor.</title>
        <authorList>
            <person name="Wiens G.D."/>
            <person name="Rockey D.D."/>
            <person name="Wu Z."/>
            <person name="Chang J."/>
            <person name="Levy R."/>
            <person name="Crane S."/>
            <person name="Chen D.S."/>
            <person name="Capri G.R."/>
            <person name="Burnett J.R."/>
            <person name="Sudheesh P.S."/>
            <person name="Schipma M.J."/>
            <person name="Burd H."/>
            <person name="Bhattacharyya A."/>
            <person name="Rhodes L.D."/>
            <person name="Kaul R."/>
            <person name="Strom M.S."/>
        </authorList>
    </citation>
    <scope>NUCLEOTIDE SEQUENCE [LARGE SCALE GENOMIC DNA]</scope>
    <source>
        <strain>ATCC 33209 / DSM 20767 / JCM 11484 / NBRC 15589 / NCIMB 2235</strain>
    </source>
</reference>
<dbReference type="EC" id="3.4.25.1" evidence="1"/>
<dbReference type="EMBL" id="CP000910">
    <property type="protein sequence ID" value="ABY23769.1"/>
    <property type="molecule type" value="Genomic_DNA"/>
</dbReference>
<dbReference type="RefSeq" id="WP_012245439.1">
    <property type="nucleotide sequence ID" value="NC_010168.1"/>
</dbReference>
<dbReference type="SMR" id="A9WSI1"/>
<dbReference type="STRING" id="288705.RSal33209_2036"/>
<dbReference type="MEROPS" id="T01.005"/>
<dbReference type="KEGG" id="rsa:RSal33209_2036"/>
<dbReference type="eggNOG" id="COG0638">
    <property type="taxonomic scope" value="Bacteria"/>
</dbReference>
<dbReference type="HOGENOM" id="CLU_035750_2_0_11"/>
<dbReference type="UniPathway" id="UPA00997"/>
<dbReference type="Proteomes" id="UP000002007">
    <property type="component" value="Chromosome"/>
</dbReference>
<dbReference type="GO" id="GO:0005737">
    <property type="term" value="C:cytoplasm"/>
    <property type="evidence" value="ECO:0007669"/>
    <property type="project" value="UniProtKB-SubCell"/>
</dbReference>
<dbReference type="GO" id="GO:0019774">
    <property type="term" value="C:proteasome core complex, beta-subunit complex"/>
    <property type="evidence" value="ECO:0007669"/>
    <property type="project" value="UniProtKB-UniRule"/>
</dbReference>
<dbReference type="GO" id="GO:0004298">
    <property type="term" value="F:threonine-type endopeptidase activity"/>
    <property type="evidence" value="ECO:0007669"/>
    <property type="project" value="UniProtKB-UniRule"/>
</dbReference>
<dbReference type="GO" id="GO:0019941">
    <property type="term" value="P:modification-dependent protein catabolic process"/>
    <property type="evidence" value="ECO:0007669"/>
    <property type="project" value="UniProtKB-UniRule"/>
</dbReference>
<dbReference type="GO" id="GO:0010498">
    <property type="term" value="P:proteasomal protein catabolic process"/>
    <property type="evidence" value="ECO:0007669"/>
    <property type="project" value="UniProtKB-UniRule"/>
</dbReference>
<dbReference type="CDD" id="cd01906">
    <property type="entry name" value="proteasome_protease_HslV"/>
    <property type="match status" value="1"/>
</dbReference>
<dbReference type="Gene3D" id="3.60.20.10">
    <property type="entry name" value="Glutamine Phosphoribosylpyrophosphate, subunit 1, domain 1"/>
    <property type="match status" value="1"/>
</dbReference>
<dbReference type="HAMAP" id="MF_02113_B">
    <property type="entry name" value="Proteasome_B_B"/>
    <property type="match status" value="1"/>
</dbReference>
<dbReference type="InterPro" id="IPR029055">
    <property type="entry name" value="Ntn_hydrolases_N"/>
</dbReference>
<dbReference type="InterPro" id="IPR001353">
    <property type="entry name" value="Proteasome_sua/b"/>
</dbReference>
<dbReference type="InterPro" id="IPR023333">
    <property type="entry name" value="Proteasome_suB-type"/>
</dbReference>
<dbReference type="InterPro" id="IPR022483">
    <property type="entry name" value="PSB_actinobac"/>
</dbReference>
<dbReference type="NCBIfam" id="TIGR03690">
    <property type="entry name" value="20S_bact_beta"/>
    <property type="match status" value="1"/>
</dbReference>
<dbReference type="PANTHER" id="PTHR32194:SF0">
    <property type="entry name" value="ATP-DEPENDENT PROTEASE SUBUNIT HSLV"/>
    <property type="match status" value="1"/>
</dbReference>
<dbReference type="PANTHER" id="PTHR32194">
    <property type="entry name" value="METALLOPROTEASE TLDD"/>
    <property type="match status" value="1"/>
</dbReference>
<dbReference type="Pfam" id="PF00227">
    <property type="entry name" value="Proteasome"/>
    <property type="match status" value="1"/>
</dbReference>
<dbReference type="SUPFAM" id="SSF56235">
    <property type="entry name" value="N-terminal nucleophile aminohydrolases (Ntn hydrolases)"/>
    <property type="match status" value="1"/>
</dbReference>
<dbReference type="PROSITE" id="PS51476">
    <property type="entry name" value="PROTEASOME_BETA_2"/>
    <property type="match status" value="1"/>
</dbReference>
<accession>A9WSI1</accession>
<protein>
    <recommendedName>
        <fullName evidence="1">Proteasome subunit beta</fullName>
        <ecNumber evidence="1">3.4.25.1</ecNumber>
    </recommendedName>
    <alternativeName>
        <fullName evidence="1">20S proteasome beta subunit</fullName>
    </alternativeName>
    <alternativeName>
        <fullName evidence="1">Proteasome core protein PrcB</fullName>
    </alternativeName>
</protein>
<sequence length="279" mass="29769">MASQAMSWRGEGERVVRDLAAASTSSFVEHLSQSRPDLLPFGQALPAGVLPQTPHATTIVAMTFAGGVLMAGDRRATMGTMIASRHIEKVFPADGYSVLGIAGTAGLAIDITKLFQVELEHYEKIEGTPLSLEGKANRLGAMVRGNLPMALQGLAVVPLFAGFDPALSQGRLFSYDVTGGRYEELEHHSVGSGSVFARGAMKKLWKPGLSESDAVQVAVESLFDAADDDSATGGPDVIRKLWPIIYTVTRGGSRKIPQHELGTVVEQVLVRRAELGRES</sequence>
<name>PSB_RENSM</name>
<evidence type="ECO:0000255" key="1">
    <source>
        <dbReference type="HAMAP-Rule" id="MF_02113"/>
    </source>
</evidence>
<keyword id="KW-0068">Autocatalytic cleavage</keyword>
<keyword id="KW-0963">Cytoplasm</keyword>
<keyword id="KW-0378">Hydrolase</keyword>
<keyword id="KW-0645">Protease</keyword>
<keyword id="KW-0647">Proteasome</keyword>
<keyword id="KW-1185">Reference proteome</keyword>
<keyword id="KW-0888">Threonine protease</keyword>
<keyword id="KW-0865">Zymogen</keyword>
<gene>
    <name evidence="1" type="primary">prcB</name>
    <name type="ordered locus">RSal33209_2036</name>
</gene>
<organism>
    <name type="scientific">Renibacterium salmoninarum (strain ATCC 33209 / DSM 20767 / JCM 11484 / NBRC 15589 / NCIMB 2235)</name>
    <dbReference type="NCBI Taxonomy" id="288705"/>
    <lineage>
        <taxon>Bacteria</taxon>
        <taxon>Bacillati</taxon>
        <taxon>Actinomycetota</taxon>
        <taxon>Actinomycetes</taxon>
        <taxon>Micrococcales</taxon>
        <taxon>Micrococcaceae</taxon>
        <taxon>Renibacterium</taxon>
    </lineage>
</organism>